<comment type="function">
    <text evidence="3 4 5 8">Maleylacetoacetate isomerase; part of the L-tyrosine degradation gene cluster that mediates the biosynthesis of the brownish pigment pyomelanin as an alternative melanin (PubMed:19028908, PubMed:22046314). The 4-hydroxyphenylpyruvate dioxygenase hppD catalyzes the conversion of 4-hydroxyphenylpyruvate to homogentisic acid (HGA) (PubMed:19028908, PubMed:22046314). The protein hmgX is crucial for this conversion and thus, probably functions as an accessory factor to mediate specific activity of hppD (PubMed:22046314). The homogentisate 1,2-dioxygenase hmgA is then involved in the cleavage of the aromatic ring of HGA and its conversion to 4-maleylacetoacetate (PubMed:19028908, PubMed:19715768). When hmgA activity is lowered by the cell wall integrity (CWI) signaling pathway, HGA accumulates and leads to the production of pyomelanin through benzoquinone acetic acid after oxidation and polymerization (PubMed:19715768). On the opposite, in non-stress conditions, both hppD and hmgA activities are balanced and HGA is degraded into 4-maleylacetoacetate (PubMed:19715768). 4-maleylacetoacetate is further converted to 4-fumarylacetoacetate by the maleylacetoacetate isomerase maiA, which is degraded into fumarate and acetoacetate by the fumarylacetoacetase fahA (Probable).</text>
</comment>
<comment type="catalytic activity">
    <reaction evidence="8">
        <text>4-maleylacetoacetate = 4-fumarylacetoacetate</text>
        <dbReference type="Rhea" id="RHEA:14817"/>
        <dbReference type="ChEBI" id="CHEBI:17105"/>
        <dbReference type="ChEBI" id="CHEBI:18034"/>
        <dbReference type="EC" id="5.2.1.2"/>
    </reaction>
    <physiologicalReaction direction="left-to-right" evidence="8">
        <dbReference type="Rhea" id="RHEA:14818"/>
    </physiologicalReaction>
</comment>
<comment type="pathway">
    <text evidence="8">Amino-acid degradation; L-phenylalanine degradation; acetoacetate and fumarate from L-phenylalanine: step 5/6.</text>
</comment>
<comment type="induction">
    <text evidence="5">Expression is positively regulated by the cluster-specific transcription factor hmgR.</text>
</comment>
<comment type="similarity">
    <text evidence="7">Belongs to the GST superfamily. Zeta family.</text>
</comment>
<dbReference type="EC" id="5.2.1.2" evidence="8"/>
<dbReference type="EMBL" id="AAHF01000008">
    <property type="protein sequence ID" value="EAL87518.1"/>
    <property type="molecule type" value="Genomic_DNA"/>
</dbReference>
<dbReference type="RefSeq" id="XP_749556.1">
    <property type="nucleotide sequence ID" value="XM_744463.1"/>
</dbReference>
<dbReference type="SMR" id="Q4WHT7"/>
<dbReference type="STRING" id="330879.Q4WHT7"/>
<dbReference type="EnsemblFungi" id="EAL87518">
    <property type="protein sequence ID" value="EAL87518"/>
    <property type="gene ID" value="AFUA_2G04240"/>
</dbReference>
<dbReference type="GeneID" id="3507124"/>
<dbReference type="KEGG" id="afm:AFUA_2G04240"/>
<dbReference type="VEuPathDB" id="FungiDB:Afu2g04240"/>
<dbReference type="eggNOG" id="KOG0868">
    <property type="taxonomic scope" value="Eukaryota"/>
</dbReference>
<dbReference type="HOGENOM" id="CLU_011226_20_0_1"/>
<dbReference type="InParanoid" id="Q4WHT7"/>
<dbReference type="OMA" id="VYNAHRF"/>
<dbReference type="OrthoDB" id="202840at2759"/>
<dbReference type="UniPathway" id="UPA00139">
    <property type="reaction ID" value="UER00340"/>
</dbReference>
<dbReference type="Proteomes" id="UP000002530">
    <property type="component" value="Chromosome 2"/>
</dbReference>
<dbReference type="GO" id="GO:0005739">
    <property type="term" value="C:mitochondrion"/>
    <property type="evidence" value="ECO:0000318"/>
    <property type="project" value="GO_Central"/>
</dbReference>
<dbReference type="GO" id="GO:0004364">
    <property type="term" value="F:glutathione transferase activity"/>
    <property type="evidence" value="ECO:0000318"/>
    <property type="project" value="GO_Central"/>
</dbReference>
<dbReference type="GO" id="GO:0016034">
    <property type="term" value="F:maleylacetoacetate isomerase activity"/>
    <property type="evidence" value="ECO:0000318"/>
    <property type="project" value="GO_Central"/>
</dbReference>
<dbReference type="GO" id="GO:0006749">
    <property type="term" value="P:glutathione metabolic process"/>
    <property type="evidence" value="ECO:0000318"/>
    <property type="project" value="GO_Central"/>
</dbReference>
<dbReference type="GO" id="GO:0006559">
    <property type="term" value="P:L-phenylalanine catabolic process"/>
    <property type="evidence" value="ECO:0000318"/>
    <property type="project" value="GO_Central"/>
</dbReference>
<dbReference type="CDD" id="cd03191">
    <property type="entry name" value="GST_C_Zeta"/>
    <property type="match status" value="1"/>
</dbReference>
<dbReference type="CDD" id="cd03042">
    <property type="entry name" value="GST_N_Zeta"/>
    <property type="match status" value="1"/>
</dbReference>
<dbReference type="FunFam" id="1.20.1050.10:FF:000010">
    <property type="entry name" value="Maleylacetoacetate isomerase isoform 1"/>
    <property type="match status" value="1"/>
</dbReference>
<dbReference type="FunFam" id="3.40.30.10:FF:000416">
    <property type="entry name" value="Maleylacetoacetate isomerase maia"/>
    <property type="match status" value="1"/>
</dbReference>
<dbReference type="Gene3D" id="1.20.1050.10">
    <property type="match status" value="1"/>
</dbReference>
<dbReference type="Gene3D" id="3.40.30.10">
    <property type="entry name" value="Glutaredoxin"/>
    <property type="match status" value="1"/>
</dbReference>
<dbReference type="InterPro" id="IPR010987">
    <property type="entry name" value="Glutathione-S-Trfase_C-like"/>
</dbReference>
<dbReference type="InterPro" id="IPR036282">
    <property type="entry name" value="Glutathione-S-Trfase_C_sf"/>
</dbReference>
<dbReference type="InterPro" id="IPR040079">
    <property type="entry name" value="Glutathione_S-Trfase"/>
</dbReference>
<dbReference type="InterPro" id="IPR004045">
    <property type="entry name" value="Glutathione_S-Trfase_N"/>
</dbReference>
<dbReference type="InterPro" id="IPR004046">
    <property type="entry name" value="GST_C"/>
</dbReference>
<dbReference type="InterPro" id="IPR005955">
    <property type="entry name" value="GST_Zeta"/>
</dbReference>
<dbReference type="InterPro" id="IPR034330">
    <property type="entry name" value="GST_Zeta_C"/>
</dbReference>
<dbReference type="InterPro" id="IPR034333">
    <property type="entry name" value="GST_Zeta_N"/>
</dbReference>
<dbReference type="InterPro" id="IPR036249">
    <property type="entry name" value="Thioredoxin-like_sf"/>
</dbReference>
<dbReference type="NCBIfam" id="TIGR01262">
    <property type="entry name" value="maiA"/>
    <property type="match status" value="1"/>
</dbReference>
<dbReference type="PANTHER" id="PTHR42673">
    <property type="entry name" value="MALEYLACETOACETATE ISOMERASE"/>
    <property type="match status" value="1"/>
</dbReference>
<dbReference type="PANTHER" id="PTHR42673:SF4">
    <property type="entry name" value="MALEYLACETOACETATE ISOMERASE"/>
    <property type="match status" value="1"/>
</dbReference>
<dbReference type="Pfam" id="PF00043">
    <property type="entry name" value="GST_C"/>
    <property type="match status" value="1"/>
</dbReference>
<dbReference type="Pfam" id="PF13409">
    <property type="entry name" value="GST_N_2"/>
    <property type="match status" value="1"/>
</dbReference>
<dbReference type="SFLD" id="SFLDS00019">
    <property type="entry name" value="Glutathione_Transferase_(cytos"/>
    <property type="match status" value="1"/>
</dbReference>
<dbReference type="SFLD" id="SFLDG00358">
    <property type="entry name" value="Main_(cytGST)"/>
    <property type="match status" value="1"/>
</dbReference>
<dbReference type="SUPFAM" id="SSF47616">
    <property type="entry name" value="GST C-terminal domain-like"/>
    <property type="match status" value="1"/>
</dbReference>
<dbReference type="SUPFAM" id="SSF52833">
    <property type="entry name" value="Thioredoxin-like"/>
    <property type="match status" value="1"/>
</dbReference>
<dbReference type="PROSITE" id="PS50405">
    <property type="entry name" value="GST_CTER"/>
    <property type="match status" value="1"/>
</dbReference>
<dbReference type="PROSITE" id="PS50404">
    <property type="entry name" value="GST_NTER"/>
    <property type="match status" value="1"/>
</dbReference>
<evidence type="ECO:0000255" key="1">
    <source>
        <dbReference type="PROSITE-ProRule" id="PRU00684"/>
    </source>
</evidence>
<evidence type="ECO:0000255" key="2">
    <source>
        <dbReference type="PROSITE-ProRule" id="PRU00685"/>
    </source>
</evidence>
<evidence type="ECO:0000269" key="3">
    <source>
    </source>
</evidence>
<evidence type="ECO:0000269" key="4">
    <source>
    </source>
</evidence>
<evidence type="ECO:0000269" key="5">
    <source>
    </source>
</evidence>
<evidence type="ECO:0000303" key="6">
    <source>
    </source>
</evidence>
<evidence type="ECO:0000305" key="7"/>
<evidence type="ECO:0000305" key="8">
    <source>
    </source>
</evidence>
<protein>
    <recommendedName>
        <fullName evidence="6">Maleylacetoacetate isomerase maiA</fullName>
        <ecNumber evidence="8">5.2.1.2</ecNumber>
    </recommendedName>
</protein>
<name>MAIA_ASPFU</name>
<reference key="1">
    <citation type="journal article" date="2005" name="Nature">
        <title>Genomic sequence of the pathogenic and allergenic filamentous fungus Aspergillus fumigatus.</title>
        <authorList>
            <person name="Nierman W.C."/>
            <person name="Pain A."/>
            <person name="Anderson M.J."/>
            <person name="Wortman J.R."/>
            <person name="Kim H.S."/>
            <person name="Arroyo J."/>
            <person name="Berriman M."/>
            <person name="Abe K."/>
            <person name="Archer D.B."/>
            <person name="Bermejo C."/>
            <person name="Bennett J.W."/>
            <person name="Bowyer P."/>
            <person name="Chen D."/>
            <person name="Collins M."/>
            <person name="Coulsen R."/>
            <person name="Davies R."/>
            <person name="Dyer P.S."/>
            <person name="Farman M.L."/>
            <person name="Fedorova N."/>
            <person name="Fedorova N.D."/>
            <person name="Feldblyum T.V."/>
            <person name="Fischer R."/>
            <person name="Fosker N."/>
            <person name="Fraser A."/>
            <person name="Garcia J.L."/>
            <person name="Garcia M.J."/>
            <person name="Goble A."/>
            <person name="Goldman G.H."/>
            <person name="Gomi K."/>
            <person name="Griffith-Jones S."/>
            <person name="Gwilliam R."/>
            <person name="Haas B.J."/>
            <person name="Haas H."/>
            <person name="Harris D.E."/>
            <person name="Horiuchi H."/>
            <person name="Huang J."/>
            <person name="Humphray S."/>
            <person name="Jimenez J."/>
            <person name="Keller N."/>
            <person name="Khouri H."/>
            <person name="Kitamoto K."/>
            <person name="Kobayashi T."/>
            <person name="Konzack S."/>
            <person name="Kulkarni R."/>
            <person name="Kumagai T."/>
            <person name="Lafton A."/>
            <person name="Latge J.-P."/>
            <person name="Li W."/>
            <person name="Lord A."/>
            <person name="Lu C."/>
            <person name="Majoros W.H."/>
            <person name="May G.S."/>
            <person name="Miller B.L."/>
            <person name="Mohamoud Y."/>
            <person name="Molina M."/>
            <person name="Monod M."/>
            <person name="Mouyna I."/>
            <person name="Mulligan S."/>
            <person name="Murphy L.D."/>
            <person name="O'Neil S."/>
            <person name="Paulsen I."/>
            <person name="Penalva M.A."/>
            <person name="Pertea M."/>
            <person name="Price C."/>
            <person name="Pritchard B.L."/>
            <person name="Quail M.A."/>
            <person name="Rabbinowitsch E."/>
            <person name="Rawlins N."/>
            <person name="Rajandream M.A."/>
            <person name="Reichard U."/>
            <person name="Renauld H."/>
            <person name="Robson G.D."/>
            <person name="Rodriguez de Cordoba S."/>
            <person name="Rodriguez-Pena J.M."/>
            <person name="Ronning C.M."/>
            <person name="Rutter S."/>
            <person name="Salzberg S.L."/>
            <person name="Sanchez M."/>
            <person name="Sanchez-Ferrero J.C."/>
            <person name="Saunders D."/>
            <person name="Seeger K."/>
            <person name="Squares R."/>
            <person name="Squares S."/>
            <person name="Takeuchi M."/>
            <person name="Tekaia F."/>
            <person name="Turner G."/>
            <person name="Vazquez de Aldana C.R."/>
            <person name="Weidman J."/>
            <person name="White O."/>
            <person name="Woodward J.R."/>
            <person name="Yu J.-H."/>
            <person name="Fraser C.M."/>
            <person name="Galagan J.E."/>
            <person name="Asai K."/>
            <person name="Machida M."/>
            <person name="Hall N."/>
            <person name="Barrell B.G."/>
            <person name="Denning D.W."/>
        </authorList>
    </citation>
    <scope>NUCLEOTIDE SEQUENCE [LARGE SCALE GENOMIC DNA]</scope>
    <source>
        <strain>ATCC MYA-4609 / CBS 101355 / FGSC A1100 / Af293</strain>
    </source>
</reference>
<reference key="2">
    <citation type="journal article" date="2009" name="Appl. Environ. Microbiol.">
        <title>Production of pyomelanin, a second type of melanin, via the tyrosine degradation pathway in Aspergillus fumigatus.</title>
        <authorList>
            <person name="Schmaler-Ripcke J."/>
            <person name="Sugareva V."/>
            <person name="Gebhardt P."/>
            <person name="Winkler R."/>
            <person name="Kniemeyer O."/>
            <person name="Heinekamp T."/>
            <person name="Brakhage A.A."/>
        </authorList>
    </citation>
    <scope>FUNCTION</scope>
    <scope>PATHWAY</scope>
</reference>
<reference key="3">
    <citation type="journal article" date="2009" name="Fungal Genet. Biol.">
        <title>The MpkA MAP kinase module regulates cell wall integrity signaling and pyomelanin formation in Aspergillus fumigatus.</title>
        <authorList>
            <person name="Valiante V."/>
            <person name="Jain R."/>
            <person name="Heinekamp T."/>
            <person name="Brakhage A.A."/>
        </authorList>
    </citation>
    <scope>FUNCTION</scope>
</reference>
<reference key="4">
    <citation type="journal article" date="2011" name="PLoS ONE">
        <title>Pyomelanin formation in Aspergillus fumigatus requires HmgX and the transcriptional activator HmgR but is dispensable for virulence.</title>
        <authorList>
            <person name="Keller S."/>
            <person name="Macheleidt J."/>
            <person name="Scherlach K."/>
            <person name="Schmaler-Ripcke J."/>
            <person name="Jacobsen I.D."/>
            <person name="Heinekamp T."/>
            <person name="Brakhage A.A."/>
        </authorList>
    </citation>
    <scope>FUNCTION</scope>
    <scope>INDUCTION</scope>
    <scope>PATHWAY</scope>
</reference>
<accession>Q4WHT7</accession>
<keyword id="KW-0413">Isomerase</keyword>
<keyword id="KW-1185">Reference proteome</keyword>
<feature type="chain" id="PRO_0000453190" description="Maleylacetoacetate isomerase maiA">
    <location>
        <begin position="1"/>
        <end position="231"/>
    </location>
</feature>
<feature type="domain" description="GST N-terminal" evidence="1">
    <location>
        <begin position="7"/>
        <end position="93"/>
    </location>
</feature>
<feature type="domain" description="GST C-terminal" evidence="2">
    <location>
        <begin position="102"/>
        <end position="224"/>
    </location>
</feature>
<proteinExistence type="evidence at transcript level"/>
<sequence length="231" mass="25311">MEDSTSPKVTLYTYFRSSCSARLRIALNLKSIPYTPIAVNLLKGEQSSPENIALNPSGTVPTLIVEHDSKEPVTITQSLAALEYLEEITPASSHALLPPASNPEARAVVRTLVDIMSCDVQPVTNLRILKRVAPFGVDRAAWSKDLIEDGFRAYEAIAAKSAGLFSVGDSITMADVCLLPAVWGAERAGVKVEKFPTIYRVAQRLEEEDAVKRAHWRTQPDTPEEFRVSSS</sequence>
<gene>
    <name evidence="6" type="primary">maiA</name>
    <name type="ORF">AFUA_2G04240</name>
</gene>
<organism>
    <name type="scientific">Aspergillus fumigatus (strain ATCC MYA-4609 / CBS 101355 / FGSC A1100 / Af293)</name>
    <name type="common">Neosartorya fumigata</name>
    <dbReference type="NCBI Taxonomy" id="330879"/>
    <lineage>
        <taxon>Eukaryota</taxon>
        <taxon>Fungi</taxon>
        <taxon>Dikarya</taxon>
        <taxon>Ascomycota</taxon>
        <taxon>Pezizomycotina</taxon>
        <taxon>Eurotiomycetes</taxon>
        <taxon>Eurotiomycetidae</taxon>
        <taxon>Eurotiales</taxon>
        <taxon>Aspergillaceae</taxon>
        <taxon>Aspergillus</taxon>
        <taxon>Aspergillus subgen. Fumigati</taxon>
    </lineage>
</organism>